<organism>
    <name type="scientific">Syntrophotalea carbinolica (strain DSM 2380 / NBRC 103641 / GraBd1)</name>
    <name type="common">Pelobacter carbinolicus</name>
    <dbReference type="NCBI Taxonomy" id="338963"/>
    <lineage>
        <taxon>Bacteria</taxon>
        <taxon>Pseudomonadati</taxon>
        <taxon>Thermodesulfobacteriota</taxon>
        <taxon>Desulfuromonadia</taxon>
        <taxon>Desulfuromonadales</taxon>
        <taxon>Syntrophotaleaceae</taxon>
        <taxon>Syntrophotalea</taxon>
    </lineage>
</organism>
<gene>
    <name evidence="1" type="primary">bioB</name>
    <name type="ordered locus">Pcar_1458</name>
</gene>
<keyword id="KW-0001">2Fe-2S</keyword>
<keyword id="KW-0004">4Fe-4S</keyword>
<keyword id="KW-0093">Biotin biosynthesis</keyword>
<keyword id="KW-0408">Iron</keyword>
<keyword id="KW-0411">Iron-sulfur</keyword>
<keyword id="KW-0479">Metal-binding</keyword>
<keyword id="KW-1185">Reference proteome</keyword>
<keyword id="KW-0949">S-adenosyl-L-methionine</keyword>
<keyword id="KW-0808">Transferase</keyword>
<protein>
    <recommendedName>
        <fullName evidence="1">Biotin synthase</fullName>
        <ecNumber evidence="1">2.8.1.6</ecNumber>
    </recommendedName>
</protein>
<sequence>MRNDIVKIVDRIIQGGRLSEAEGRSILQAGGASLGWVMAGAQQLRETYCGDGVGLCMIVNAKSGHCSEDCRFCAQSSHYHTGAPVFPLKTAEQIVAEAQCADSRGARCFGIVTSGARVLPGAELESILAALREIRETTRIAPSASLGLLDEETARALADAGCVTYHHNLETARSYFPHICTTHDYDQDLETVRVAKAAGMKVCCGGLFGLGETPEQRLELGLTLRELDIDSVPINFLNPVAGTPLADATPLEPMEALKIIALYRYLMPDRHITVCGGRGVTLGDFQSWIFQAGASGMMVGDYLTTAGRQLSDDLRMVTDAGLTYERC</sequence>
<reference key="1">
    <citation type="submission" date="2005-10" db="EMBL/GenBank/DDBJ databases">
        <title>Complete sequence of Pelobacter carbinolicus DSM 2380.</title>
        <authorList>
            <person name="Copeland A."/>
            <person name="Lucas S."/>
            <person name="Lapidus A."/>
            <person name="Barry K."/>
            <person name="Detter J.C."/>
            <person name="Glavina T."/>
            <person name="Hammon N."/>
            <person name="Israni S."/>
            <person name="Pitluck S."/>
            <person name="Chertkov O."/>
            <person name="Schmutz J."/>
            <person name="Larimer F."/>
            <person name="Land M."/>
            <person name="Kyrpides N."/>
            <person name="Ivanova N."/>
            <person name="Richardson P."/>
        </authorList>
    </citation>
    <scope>NUCLEOTIDE SEQUENCE [LARGE SCALE GENOMIC DNA]</scope>
    <source>
        <strain>DSM 2380 / NBRC 103641 / GraBd1</strain>
    </source>
</reference>
<feature type="chain" id="PRO_0000381519" description="Biotin synthase">
    <location>
        <begin position="1"/>
        <end position="327"/>
    </location>
</feature>
<feature type="domain" description="Radical SAM core" evidence="2">
    <location>
        <begin position="48"/>
        <end position="278"/>
    </location>
</feature>
<feature type="binding site" evidence="1">
    <location>
        <position position="66"/>
    </location>
    <ligand>
        <name>[4Fe-4S] cluster</name>
        <dbReference type="ChEBI" id="CHEBI:49883"/>
        <note>4Fe-4S-S-AdoMet</note>
    </ligand>
</feature>
<feature type="binding site" evidence="1">
    <location>
        <position position="70"/>
    </location>
    <ligand>
        <name>[4Fe-4S] cluster</name>
        <dbReference type="ChEBI" id="CHEBI:49883"/>
        <note>4Fe-4S-S-AdoMet</note>
    </ligand>
</feature>
<feature type="binding site" evidence="1">
    <location>
        <position position="73"/>
    </location>
    <ligand>
        <name>[4Fe-4S] cluster</name>
        <dbReference type="ChEBI" id="CHEBI:49883"/>
        <note>4Fe-4S-S-AdoMet</note>
    </ligand>
</feature>
<feature type="binding site" evidence="1">
    <location>
        <position position="143"/>
    </location>
    <ligand>
        <name>[2Fe-2S] cluster</name>
        <dbReference type="ChEBI" id="CHEBI:190135"/>
    </ligand>
</feature>
<feature type="binding site" evidence="1">
    <location>
        <position position="203"/>
    </location>
    <ligand>
        <name>[2Fe-2S] cluster</name>
        <dbReference type="ChEBI" id="CHEBI:190135"/>
    </ligand>
</feature>
<name>BIOB_SYNC1</name>
<dbReference type="EC" id="2.8.1.6" evidence="1"/>
<dbReference type="EMBL" id="CP000142">
    <property type="protein sequence ID" value="ABA88704.1"/>
    <property type="molecule type" value="Genomic_DNA"/>
</dbReference>
<dbReference type="RefSeq" id="WP_011341187.1">
    <property type="nucleotide sequence ID" value="NC_007498.2"/>
</dbReference>
<dbReference type="SMR" id="Q3A4K3"/>
<dbReference type="STRING" id="338963.Pcar_1458"/>
<dbReference type="KEGG" id="pca:Pcar_1458"/>
<dbReference type="eggNOG" id="COG0502">
    <property type="taxonomic scope" value="Bacteria"/>
</dbReference>
<dbReference type="HOGENOM" id="CLU_033172_2_1_7"/>
<dbReference type="OrthoDB" id="9786826at2"/>
<dbReference type="UniPathway" id="UPA00078">
    <property type="reaction ID" value="UER00162"/>
</dbReference>
<dbReference type="Proteomes" id="UP000002534">
    <property type="component" value="Chromosome"/>
</dbReference>
<dbReference type="GO" id="GO:0051537">
    <property type="term" value="F:2 iron, 2 sulfur cluster binding"/>
    <property type="evidence" value="ECO:0007669"/>
    <property type="project" value="UniProtKB-KW"/>
</dbReference>
<dbReference type="GO" id="GO:0051539">
    <property type="term" value="F:4 iron, 4 sulfur cluster binding"/>
    <property type="evidence" value="ECO:0007669"/>
    <property type="project" value="UniProtKB-KW"/>
</dbReference>
<dbReference type="GO" id="GO:0004076">
    <property type="term" value="F:biotin synthase activity"/>
    <property type="evidence" value="ECO:0007669"/>
    <property type="project" value="UniProtKB-UniRule"/>
</dbReference>
<dbReference type="GO" id="GO:0005506">
    <property type="term" value="F:iron ion binding"/>
    <property type="evidence" value="ECO:0007669"/>
    <property type="project" value="UniProtKB-UniRule"/>
</dbReference>
<dbReference type="GO" id="GO:0009102">
    <property type="term" value="P:biotin biosynthetic process"/>
    <property type="evidence" value="ECO:0007669"/>
    <property type="project" value="UniProtKB-UniRule"/>
</dbReference>
<dbReference type="CDD" id="cd01335">
    <property type="entry name" value="Radical_SAM"/>
    <property type="match status" value="1"/>
</dbReference>
<dbReference type="Gene3D" id="3.20.20.70">
    <property type="entry name" value="Aldolase class I"/>
    <property type="match status" value="1"/>
</dbReference>
<dbReference type="HAMAP" id="MF_01694">
    <property type="entry name" value="BioB"/>
    <property type="match status" value="1"/>
</dbReference>
<dbReference type="InterPro" id="IPR013785">
    <property type="entry name" value="Aldolase_TIM"/>
</dbReference>
<dbReference type="InterPro" id="IPR010722">
    <property type="entry name" value="BATS_dom"/>
</dbReference>
<dbReference type="InterPro" id="IPR002684">
    <property type="entry name" value="Biotin_synth/BioAB"/>
</dbReference>
<dbReference type="InterPro" id="IPR024177">
    <property type="entry name" value="Biotin_synthase"/>
</dbReference>
<dbReference type="InterPro" id="IPR006638">
    <property type="entry name" value="Elp3/MiaA/NifB-like_rSAM"/>
</dbReference>
<dbReference type="InterPro" id="IPR007197">
    <property type="entry name" value="rSAM"/>
</dbReference>
<dbReference type="NCBIfam" id="TIGR00433">
    <property type="entry name" value="bioB"/>
    <property type="match status" value="1"/>
</dbReference>
<dbReference type="PANTHER" id="PTHR22976">
    <property type="entry name" value="BIOTIN SYNTHASE"/>
    <property type="match status" value="1"/>
</dbReference>
<dbReference type="PANTHER" id="PTHR22976:SF2">
    <property type="entry name" value="BIOTIN SYNTHASE, MITOCHONDRIAL"/>
    <property type="match status" value="1"/>
</dbReference>
<dbReference type="Pfam" id="PF06968">
    <property type="entry name" value="BATS"/>
    <property type="match status" value="1"/>
</dbReference>
<dbReference type="Pfam" id="PF04055">
    <property type="entry name" value="Radical_SAM"/>
    <property type="match status" value="1"/>
</dbReference>
<dbReference type="PIRSF" id="PIRSF001619">
    <property type="entry name" value="Biotin_synth"/>
    <property type="match status" value="1"/>
</dbReference>
<dbReference type="SFLD" id="SFLDG01060">
    <property type="entry name" value="BATS_domain_containing"/>
    <property type="match status" value="1"/>
</dbReference>
<dbReference type="SFLD" id="SFLDG01278">
    <property type="entry name" value="biotin_synthase_like"/>
    <property type="match status" value="1"/>
</dbReference>
<dbReference type="SMART" id="SM00876">
    <property type="entry name" value="BATS"/>
    <property type="match status" value="1"/>
</dbReference>
<dbReference type="SMART" id="SM00729">
    <property type="entry name" value="Elp3"/>
    <property type="match status" value="1"/>
</dbReference>
<dbReference type="SUPFAM" id="SSF102114">
    <property type="entry name" value="Radical SAM enzymes"/>
    <property type="match status" value="1"/>
</dbReference>
<dbReference type="PROSITE" id="PS51918">
    <property type="entry name" value="RADICAL_SAM"/>
    <property type="match status" value="1"/>
</dbReference>
<evidence type="ECO:0000255" key="1">
    <source>
        <dbReference type="HAMAP-Rule" id="MF_01694"/>
    </source>
</evidence>
<evidence type="ECO:0000255" key="2">
    <source>
        <dbReference type="PROSITE-ProRule" id="PRU01266"/>
    </source>
</evidence>
<comment type="function">
    <text evidence="1">Catalyzes the conversion of dethiobiotin (DTB) to biotin by the insertion of a sulfur atom into dethiobiotin via a radical-based mechanism.</text>
</comment>
<comment type="catalytic activity">
    <reaction evidence="1">
        <text>(4R,5S)-dethiobiotin + (sulfur carrier)-SH + 2 reduced [2Fe-2S]-[ferredoxin] + 2 S-adenosyl-L-methionine = (sulfur carrier)-H + biotin + 2 5'-deoxyadenosine + 2 L-methionine + 2 oxidized [2Fe-2S]-[ferredoxin]</text>
        <dbReference type="Rhea" id="RHEA:22060"/>
        <dbReference type="Rhea" id="RHEA-COMP:10000"/>
        <dbReference type="Rhea" id="RHEA-COMP:10001"/>
        <dbReference type="Rhea" id="RHEA-COMP:14737"/>
        <dbReference type="Rhea" id="RHEA-COMP:14739"/>
        <dbReference type="ChEBI" id="CHEBI:17319"/>
        <dbReference type="ChEBI" id="CHEBI:29917"/>
        <dbReference type="ChEBI" id="CHEBI:33737"/>
        <dbReference type="ChEBI" id="CHEBI:33738"/>
        <dbReference type="ChEBI" id="CHEBI:57586"/>
        <dbReference type="ChEBI" id="CHEBI:57844"/>
        <dbReference type="ChEBI" id="CHEBI:59789"/>
        <dbReference type="ChEBI" id="CHEBI:64428"/>
        <dbReference type="ChEBI" id="CHEBI:149473"/>
        <dbReference type="EC" id="2.8.1.6"/>
    </reaction>
</comment>
<comment type="cofactor">
    <cofactor evidence="1">
        <name>[4Fe-4S] cluster</name>
        <dbReference type="ChEBI" id="CHEBI:49883"/>
    </cofactor>
    <text evidence="1">Binds 1 [4Fe-4S] cluster. The cluster is coordinated with 3 cysteines and an exchangeable S-adenosyl-L-methionine.</text>
</comment>
<comment type="cofactor">
    <cofactor evidence="1">
        <name>[2Fe-2S] cluster</name>
        <dbReference type="ChEBI" id="CHEBI:190135"/>
    </cofactor>
    <text evidence="1">Binds 1 [2Fe-2S] cluster. The cluster is coordinated with 3 cysteines and 1 arginine.</text>
</comment>
<comment type="pathway">
    <text evidence="1">Cofactor biosynthesis; biotin biosynthesis; biotin from 7,8-diaminononanoate: step 2/2.</text>
</comment>
<comment type="subunit">
    <text evidence="1">Homodimer.</text>
</comment>
<comment type="similarity">
    <text evidence="1">Belongs to the radical SAM superfamily. Biotin synthase family.</text>
</comment>
<proteinExistence type="inferred from homology"/>
<accession>Q3A4K3</accession>